<accession>Q8G3G3</accession>
<gene>
    <name evidence="1" type="primary">pafA</name>
    <name type="ordered locus">BL1797</name>
</gene>
<evidence type="ECO:0000255" key="1">
    <source>
        <dbReference type="HAMAP-Rule" id="MF_02111"/>
    </source>
</evidence>
<feature type="chain" id="PRO_0000395900" description="Pup--protein ligase">
    <location>
        <begin position="1"/>
        <end position="486"/>
    </location>
</feature>
<feature type="active site" description="Proton acceptor" evidence="1">
    <location>
        <position position="80"/>
    </location>
</feature>
<feature type="binding site" evidence="1">
    <location>
        <position position="33"/>
    </location>
    <ligand>
        <name>Mg(2+)</name>
        <dbReference type="ChEBI" id="CHEBI:18420"/>
    </ligand>
</feature>
<feature type="binding site" evidence="1">
    <location>
        <position position="76"/>
    </location>
    <ligand>
        <name>ATP</name>
        <dbReference type="ChEBI" id="CHEBI:30616"/>
    </ligand>
</feature>
<feature type="binding site" evidence="1">
    <location>
        <position position="78"/>
    </location>
    <ligand>
        <name>Mg(2+)</name>
        <dbReference type="ChEBI" id="CHEBI:18420"/>
    </ligand>
</feature>
<feature type="binding site" evidence="1">
    <location>
        <position position="86"/>
    </location>
    <ligand>
        <name>Mg(2+)</name>
        <dbReference type="ChEBI" id="CHEBI:18420"/>
    </ligand>
</feature>
<feature type="binding site" evidence="1">
    <location>
        <position position="89"/>
    </location>
    <ligand>
        <name>ATP</name>
        <dbReference type="ChEBI" id="CHEBI:30616"/>
    </ligand>
</feature>
<feature type="binding site" evidence="1">
    <location>
        <position position="451"/>
    </location>
    <ligand>
        <name>ATP</name>
        <dbReference type="ChEBI" id="CHEBI:30616"/>
    </ligand>
</feature>
<protein>
    <recommendedName>
        <fullName evidence="1">Pup--protein ligase</fullName>
        <ecNumber evidence="1">6.3.1.19</ecNumber>
    </recommendedName>
    <alternativeName>
        <fullName evidence="1">Proteasome accessory factor A</fullName>
    </alternativeName>
    <alternativeName>
        <fullName evidence="1">Pup-conjugating enzyme</fullName>
    </alternativeName>
</protein>
<dbReference type="EC" id="6.3.1.19" evidence="1"/>
<dbReference type="EMBL" id="AE014295">
    <property type="protein sequence ID" value="AAN25580.1"/>
    <property type="molecule type" value="Genomic_DNA"/>
</dbReference>
<dbReference type="RefSeq" id="NP_696944.1">
    <property type="nucleotide sequence ID" value="NC_004307.2"/>
</dbReference>
<dbReference type="RefSeq" id="WP_011068846.1">
    <property type="nucleotide sequence ID" value="NC_004307.2"/>
</dbReference>
<dbReference type="SMR" id="Q8G3G3"/>
<dbReference type="STRING" id="206672.BL1797"/>
<dbReference type="EnsemblBacteria" id="AAN25580">
    <property type="protein sequence ID" value="AAN25580"/>
    <property type="gene ID" value="BL1797"/>
</dbReference>
<dbReference type="KEGG" id="blo:BL1797"/>
<dbReference type="PATRIC" id="fig|206672.9.peg.1851"/>
<dbReference type="HOGENOM" id="CLU_040524_0_1_11"/>
<dbReference type="OrthoDB" id="9760627at2"/>
<dbReference type="PhylomeDB" id="Q8G3G3"/>
<dbReference type="UniPathway" id="UPA00997"/>
<dbReference type="UniPathway" id="UPA00998"/>
<dbReference type="Proteomes" id="UP000000439">
    <property type="component" value="Chromosome"/>
</dbReference>
<dbReference type="GO" id="GO:0005524">
    <property type="term" value="F:ATP binding"/>
    <property type="evidence" value="ECO:0007669"/>
    <property type="project" value="UniProtKB-UniRule"/>
</dbReference>
<dbReference type="GO" id="GO:0016879">
    <property type="term" value="F:ligase activity, forming carbon-nitrogen bonds"/>
    <property type="evidence" value="ECO:0007669"/>
    <property type="project" value="InterPro"/>
</dbReference>
<dbReference type="GO" id="GO:0000287">
    <property type="term" value="F:magnesium ion binding"/>
    <property type="evidence" value="ECO:0007669"/>
    <property type="project" value="UniProtKB-UniRule"/>
</dbReference>
<dbReference type="GO" id="GO:0019787">
    <property type="term" value="F:ubiquitin-like protein transferase activity"/>
    <property type="evidence" value="ECO:0007669"/>
    <property type="project" value="UniProtKB-UniRule"/>
</dbReference>
<dbReference type="GO" id="GO:0019941">
    <property type="term" value="P:modification-dependent protein catabolic process"/>
    <property type="evidence" value="ECO:0007669"/>
    <property type="project" value="UniProtKB-UniRule"/>
</dbReference>
<dbReference type="GO" id="GO:0010498">
    <property type="term" value="P:proteasomal protein catabolic process"/>
    <property type="evidence" value="ECO:0007669"/>
    <property type="project" value="UniProtKB-UniRule"/>
</dbReference>
<dbReference type="GO" id="GO:0070490">
    <property type="term" value="P:protein pupylation"/>
    <property type="evidence" value="ECO:0007669"/>
    <property type="project" value="UniProtKB-UniRule"/>
</dbReference>
<dbReference type="HAMAP" id="MF_02111">
    <property type="entry name" value="Pup_ligase"/>
    <property type="match status" value="1"/>
</dbReference>
<dbReference type="InterPro" id="IPR022279">
    <property type="entry name" value="Pup_ligase"/>
</dbReference>
<dbReference type="InterPro" id="IPR004347">
    <property type="entry name" value="Pup_ligase/deamidase"/>
</dbReference>
<dbReference type="NCBIfam" id="TIGR03686">
    <property type="entry name" value="pupylate_PafA"/>
    <property type="match status" value="1"/>
</dbReference>
<dbReference type="PANTHER" id="PTHR42307">
    <property type="entry name" value="PUP DEAMIDASE/DEPUPYLASE"/>
    <property type="match status" value="1"/>
</dbReference>
<dbReference type="PANTHER" id="PTHR42307:SF3">
    <property type="entry name" value="PUP--PROTEIN LIGASE"/>
    <property type="match status" value="1"/>
</dbReference>
<dbReference type="Pfam" id="PF03136">
    <property type="entry name" value="Pup_ligase"/>
    <property type="match status" value="1"/>
</dbReference>
<dbReference type="PIRSF" id="PIRSF018077">
    <property type="entry name" value="UCP018077"/>
    <property type="match status" value="1"/>
</dbReference>
<organism>
    <name type="scientific">Bifidobacterium longum (strain NCC 2705)</name>
    <dbReference type="NCBI Taxonomy" id="206672"/>
    <lineage>
        <taxon>Bacteria</taxon>
        <taxon>Bacillati</taxon>
        <taxon>Actinomycetota</taxon>
        <taxon>Actinomycetes</taxon>
        <taxon>Bifidobacteriales</taxon>
        <taxon>Bifidobacteriaceae</taxon>
        <taxon>Bifidobacterium</taxon>
    </lineage>
</organism>
<keyword id="KW-0067">ATP-binding</keyword>
<keyword id="KW-0436">Ligase</keyword>
<keyword id="KW-0460">Magnesium</keyword>
<keyword id="KW-0479">Metal-binding</keyword>
<keyword id="KW-0547">Nucleotide-binding</keyword>
<keyword id="KW-1185">Reference proteome</keyword>
<keyword id="KW-0833">Ubl conjugation pathway</keyword>
<sequence length="486" mass="54066">MPQLRDSGTRSLHATEPVPSAEMDGFCRIFGVETEYGVAVTGAERPVDAGQVAMTMFQPIVSRSRSTNTYLANGSRLYLDVGSHPEYATAEARDPREALAQDLAGEHVMRNLALKAQRKLRESYGAHATIHVFKNNVDSAGHAFGCHENYLVRRFVPLETIEHQLLPFLITRQLYTGAGRMTPDGFQITQRADFLDEAVSSATTRSRPMVNTRDEPHADPDSFRRLHVIIGDSNRSQWSTWMKLAVTHLVLCAIEDAFRHGVPSGFEQYAFADPAAANRTVSRFLDNPRAELTLESGESVSALGLQRRYYAAVKAFIETHGDALAGSLPATTIDTIMGEWSRVLDALERGAYDALADRVDWAAKKCLFDALKRRRPDVTFAQMEQLELDYHDIANGRLYGSLVARNQMRELLTGDNVEYAVHNPPTDTRAALRGRFVDAALNVGAQFSADWTHLTLTAPERREAILLDPFEAEPTLGFEQLMEALN</sequence>
<reference key="1">
    <citation type="journal article" date="2002" name="Proc. Natl. Acad. Sci. U.S.A.">
        <title>The genome sequence of Bifidobacterium longum reflects its adaptation to the human gastrointestinal tract.</title>
        <authorList>
            <person name="Schell M.A."/>
            <person name="Karmirantzou M."/>
            <person name="Snel B."/>
            <person name="Vilanova D."/>
            <person name="Berger B."/>
            <person name="Pessi G."/>
            <person name="Zwahlen M.-C."/>
            <person name="Desiere F."/>
            <person name="Bork P."/>
            <person name="Delley M."/>
            <person name="Pridmore R.D."/>
            <person name="Arigoni F."/>
        </authorList>
    </citation>
    <scope>NUCLEOTIDE SEQUENCE [LARGE SCALE GENOMIC DNA]</scope>
    <source>
        <strain>NCC 2705</strain>
    </source>
</reference>
<comment type="function">
    <text evidence="1">Catalyzes the covalent attachment of the prokaryotic ubiquitin-like protein modifier Pup to the proteasomal substrate proteins, thereby targeting them for proteasomal degradation. This tagging system is termed pupylation. The ligation reaction involves the side-chain carboxylate of the C-terminal glutamate of Pup and the side-chain amino group of a substrate lysine.</text>
</comment>
<comment type="catalytic activity">
    <reaction evidence="1">
        <text>ATP + [prokaryotic ubiquitin-like protein]-L-glutamate + [protein]-L-lysine = ADP + phosphate + N(6)-([prokaryotic ubiquitin-like protein]-gamma-L-glutamyl)-[protein]-L-lysine.</text>
        <dbReference type="EC" id="6.3.1.19"/>
    </reaction>
</comment>
<comment type="pathway">
    <text evidence="1">Protein degradation; proteasomal Pup-dependent pathway.</text>
</comment>
<comment type="pathway">
    <text evidence="1">Protein modification; protein pupylation.</text>
</comment>
<comment type="miscellaneous">
    <text evidence="1">The reaction mechanism probably proceeds via the activation of Pup by phosphorylation of its C-terminal glutamate, which is then subject to nucleophilic attack by the substrate lysine, resulting in an isopeptide bond and the release of phosphate as a good leaving group.</text>
</comment>
<comment type="similarity">
    <text evidence="1">Belongs to the Pup ligase/Pup deamidase family. Pup-conjugating enzyme subfamily.</text>
</comment>
<name>PAFA_BIFLO</name>
<proteinExistence type="inferred from homology"/>